<proteinExistence type="inferred from homology"/>
<name>COAX_KORVE</name>
<feature type="chain" id="PRO_0000267486" description="Type III pantothenate kinase">
    <location>
        <begin position="1"/>
        <end position="274"/>
    </location>
</feature>
<feature type="active site" description="Proton acceptor" evidence="1">
    <location>
        <position position="119"/>
    </location>
</feature>
<feature type="binding site" evidence="1">
    <location>
        <begin position="6"/>
        <end position="13"/>
    </location>
    <ligand>
        <name>ATP</name>
        <dbReference type="ChEBI" id="CHEBI:30616"/>
    </ligand>
</feature>
<feature type="binding site" evidence="1">
    <location>
        <position position="110"/>
    </location>
    <ligand>
        <name>substrate</name>
    </ligand>
</feature>
<feature type="binding site" evidence="1">
    <location>
        <begin position="117"/>
        <end position="120"/>
    </location>
    <ligand>
        <name>substrate</name>
    </ligand>
</feature>
<feature type="binding site" evidence="1">
    <location>
        <position position="139"/>
    </location>
    <ligand>
        <name>K(+)</name>
        <dbReference type="ChEBI" id="CHEBI:29103"/>
    </ligand>
</feature>
<feature type="binding site" evidence="1">
    <location>
        <position position="142"/>
    </location>
    <ligand>
        <name>ATP</name>
        <dbReference type="ChEBI" id="CHEBI:30616"/>
    </ligand>
</feature>
<feature type="binding site" evidence="1">
    <location>
        <position position="194"/>
    </location>
    <ligand>
        <name>substrate</name>
    </ligand>
</feature>
<reference key="1">
    <citation type="journal article" date="2009" name="Appl. Environ. Microbiol.">
        <title>Three genomes from the phylum Acidobacteria provide insight into the lifestyles of these microorganisms in soils.</title>
        <authorList>
            <person name="Ward N.L."/>
            <person name="Challacombe J.F."/>
            <person name="Janssen P.H."/>
            <person name="Henrissat B."/>
            <person name="Coutinho P.M."/>
            <person name="Wu M."/>
            <person name="Xie G."/>
            <person name="Haft D.H."/>
            <person name="Sait M."/>
            <person name="Badger J."/>
            <person name="Barabote R.D."/>
            <person name="Bradley B."/>
            <person name="Brettin T.S."/>
            <person name="Brinkac L.M."/>
            <person name="Bruce D."/>
            <person name="Creasy T."/>
            <person name="Daugherty S.C."/>
            <person name="Davidsen T.M."/>
            <person name="DeBoy R.T."/>
            <person name="Detter J.C."/>
            <person name="Dodson R.J."/>
            <person name="Durkin A.S."/>
            <person name="Ganapathy A."/>
            <person name="Gwinn-Giglio M."/>
            <person name="Han C.S."/>
            <person name="Khouri H."/>
            <person name="Kiss H."/>
            <person name="Kothari S.P."/>
            <person name="Madupu R."/>
            <person name="Nelson K.E."/>
            <person name="Nelson W.C."/>
            <person name="Paulsen I."/>
            <person name="Penn K."/>
            <person name="Ren Q."/>
            <person name="Rosovitz M.J."/>
            <person name="Selengut J.D."/>
            <person name="Shrivastava S."/>
            <person name="Sullivan S.A."/>
            <person name="Tapia R."/>
            <person name="Thompson L.S."/>
            <person name="Watkins K.L."/>
            <person name="Yang Q."/>
            <person name="Yu C."/>
            <person name="Zafar N."/>
            <person name="Zhou L."/>
            <person name="Kuske C.R."/>
        </authorList>
    </citation>
    <scope>NUCLEOTIDE SEQUENCE [LARGE SCALE GENOMIC DNA]</scope>
    <source>
        <strain>Ellin345</strain>
    </source>
</reference>
<keyword id="KW-0067">ATP-binding</keyword>
<keyword id="KW-0173">Coenzyme A biosynthesis</keyword>
<keyword id="KW-0963">Cytoplasm</keyword>
<keyword id="KW-0418">Kinase</keyword>
<keyword id="KW-0479">Metal-binding</keyword>
<keyword id="KW-0547">Nucleotide-binding</keyword>
<keyword id="KW-0630">Potassium</keyword>
<keyword id="KW-1185">Reference proteome</keyword>
<keyword id="KW-0808">Transferase</keyword>
<protein>
    <recommendedName>
        <fullName evidence="1">Type III pantothenate kinase</fullName>
        <ecNumber evidence="1">2.7.1.33</ecNumber>
    </recommendedName>
    <alternativeName>
        <fullName evidence="1">PanK-III</fullName>
    </alternativeName>
    <alternativeName>
        <fullName evidence="1">Pantothenic acid kinase</fullName>
    </alternativeName>
</protein>
<comment type="function">
    <text evidence="1">Catalyzes the phosphorylation of pantothenate (Pan), the first step in CoA biosynthesis.</text>
</comment>
<comment type="catalytic activity">
    <reaction evidence="1">
        <text>(R)-pantothenate + ATP = (R)-4'-phosphopantothenate + ADP + H(+)</text>
        <dbReference type="Rhea" id="RHEA:16373"/>
        <dbReference type="ChEBI" id="CHEBI:10986"/>
        <dbReference type="ChEBI" id="CHEBI:15378"/>
        <dbReference type="ChEBI" id="CHEBI:29032"/>
        <dbReference type="ChEBI" id="CHEBI:30616"/>
        <dbReference type="ChEBI" id="CHEBI:456216"/>
        <dbReference type="EC" id="2.7.1.33"/>
    </reaction>
</comment>
<comment type="cofactor">
    <cofactor evidence="1">
        <name>NH4(+)</name>
        <dbReference type="ChEBI" id="CHEBI:28938"/>
    </cofactor>
    <cofactor evidence="1">
        <name>K(+)</name>
        <dbReference type="ChEBI" id="CHEBI:29103"/>
    </cofactor>
    <text evidence="1">A monovalent cation. Ammonium or potassium.</text>
</comment>
<comment type="pathway">
    <text evidence="1">Cofactor biosynthesis; coenzyme A biosynthesis; CoA from (R)-pantothenate: step 1/5.</text>
</comment>
<comment type="subunit">
    <text evidence="1">Homodimer.</text>
</comment>
<comment type="subcellular location">
    <subcellularLocation>
        <location evidence="1">Cytoplasm</location>
    </subcellularLocation>
</comment>
<comment type="similarity">
    <text evidence="1">Belongs to the type III pantothenate kinase family.</text>
</comment>
<gene>
    <name evidence="1" type="primary">coaX</name>
    <name type="ordered locus">Acid345_0136</name>
</gene>
<organism>
    <name type="scientific">Koribacter versatilis (strain Ellin345)</name>
    <dbReference type="NCBI Taxonomy" id="204669"/>
    <lineage>
        <taxon>Bacteria</taxon>
        <taxon>Pseudomonadati</taxon>
        <taxon>Acidobacteriota</taxon>
        <taxon>Terriglobia</taxon>
        <taxon>Terriglobales</taxon>
        <taxon>Candidatus Korobacteraceae</taxon>
        <taxon>Candidatus Korobacter</taxon>
    </lineage>
</organism>
<accession>Q1IVF9</accession>
<dbReference type="EC" id="2.7.1.33" evidence="1"/>
<dbReference type="EMBL" id="CP000360">
    <property type="protein sequence ID" value="ABF39141.1"/>
    <property type="molecule type" value="Genomic_DNA"/>
</dbReference>
<dbReference type="RefSeq" id="WP_011520943.1">
    <property type="nucleotide sequence ID" value="NC_008009.1"/>
</dbReference>
<dbReference type="SMR" id="Q1IVF9"/>
<dbReference type="STRING" id="204669.Acid345_0136"/>
<dbReference type="EnsemblBacteria" id="ABF39141">
    <property type="protein sequence ID" value="ABF39141"/>
    <property type="gene ID" value="Acid345_0136"/>
</dbReference>
<dbReference type="KEGG" id="aba:Acid345_0136"/>
<dbReference type="eggNOG" id="COG1521">
    <property type="taxonomic scope" value="Bacteria"/>
</dbReference>
<dbReference type="HOGENOM" id="CLU_066627_1_0_0"/>
<dbReference type="OrthoDB" id="9804707at2"/>
<dbReference type="UniPathway" id="UPA00241">
    <property type="reaction ID" value="UER00352"/>
</dbReference>
<dbReference type="Proteomes" id="UP000002432">
    <property type="component" value="Chromosome"/>
</dbReference>
<dbReference type="GO" id="GO:0005737">
    <property type="term" value="C:cytoplasm"/>
    <property type="evidence" value="ECO:0007669"/>
    <property type="project" value="UniProtKB-SubCell"/>
</dbReference>
<dbReference type="GO" id="GO:0005524">
    <property type="term" value="F:ATP binding"/>
    <property type="evidence" value="ECO:0007669"/>
    <property type="project" value="UniProtKB-UniRule"/>
</dbReference>
<dbReference type="GO" id="GO:0046872">
    <property type="term" value="F:metal ion binding"/>
    <property type="evidence" value="ECO:0007669"/>
    <property type="project" value="UniProtKB-KW"/>
</dbReference>
<dbReference type="GO" id="GO:0004594">
    <property type="term" value="F:pantothenate kinase activity"/>
    <property type="evidence" value="ECO:0007669"/>
    <property type="project" value="UniProtKB-UniRule"/>
</dbReference>
<dbReference type="GO" id="GO:0015937">
    <property type="term" value="P:coenzyme A biosynthetic process"/>
    <property type="evidence" value="ECO:0007669"/>
    <property type="project" value="UniProtKB-UniRule"/>
</dbReference>
<dbReference type="CDD" id="cd24015">
    <property type="entry name" value="ASKHA_NBD_PanK-III"/>
    <property type="match status" value="1"/>
</dbReference>
<dbReference type="Gene3D" id="3.30.420.40">
    <property type="match status" value="2"/>
</dbReference>
<dbReference type="HAMAP" id="MF_01274">
    <property type="entry name" value="Pantothen_kinase_3"/>
    <property type="match status" value="1"/>
</dbReference>
<dbReference type="InterPro" id="IPR043129">
    <property type="entry name" value="ATPase_NBD"/>
</dbReference>
<dbReference type="InterPro" id="IPR004619">
    <property type="entry name" value="Type_III_PanK"/>
</dbReference>
<dbReference type="NCBIfam" id="TIGR00671">
    <property type="entry name" value="baf"/>
    <property type="match status" value="1"/>
</dbReference>
<dbReference type="NCBIfam" id="NF009848">
    <property type="entry name" value="PRK13318.1-6"/>
    <property type="match status" value="1"/>
</dbReference>
<dbReference type="NCBIfam" id="NF009855">
    <property type="entry name" value="PRK13321.1"/>
    <property type="match status" value="1"/>
</dbReference>
<dbReference type="PANTHER" id="PTHR34265">
    <property type="entry name" value="TYPE III PANTOTHENATE KINASE"/>
    <property type="match status" value="1"/>
</dbReference>
<dbReference type="PANTHER" id="PTHR34265:SF1">
    <property type="entry name" value="TYPE III PANTOTHENATE KINASE"/>
    <property type="match status" value="1"/>
</dbReference>
<dbReference type="Pfam" id="PF03309">
    <property type="entry name" value="Pan_kinase"/>
    <property type="match status" value="1"/>
</dbReference>
<dbReference type="SUPFAM" id="SSF53067">
    <property type="entry name" value="Actin-like ATPase domain"/>
    <property type="match status" value="2"/>
</dbReference>
<evidence type="ECO:0000255" key="1">
    <source>
        <dbReference type="HAMAP-Rule" id="MF_01274"/>
    </source>
</evidence>
<sequence length="274" mass="29821">MLLVLDVGNTNTVLGVFEATPAENGSYTYGRLIAHWRVGTIRTQTVDEYGVLFRNLFAMGNVDFKVIHGIIISSVVPPMDTTLRSVCERYFALKPLFVEPGVKTGMPVHYDNPSEVGADRIVNSVAAFEKYGGPCISVDFGTATTFDVVSAKGEYLGGVIAPGIGISAEALFQRTARLPRVDIKRPTKVMGTNTVNSMQSGFYWGYLGLVDGILERLVEEMGGNVKIVATGGLSPLIGAGSKYIKDVDDLLTLDGLRIIWERNQSNTRKREHGK</sequence>